<feature type="chain" id="PRO_0000298100" description="Cell division topological specificity factor">
    <location>
        <begin position="1"/>
        <end position="88"/>
    </location>
</feature>
<sequence>MDLFKLFSGKPSSKEVAKDRLKLILIHDRSSIAPELLEVMKSDILKVISKYVIIDDDEVEVRLTKTEEVDASSPALIASIPIKKMKQR</sequence>
<dbReference type="EMBL" id="CP000382">
    <property type="protein sequence ID" value="ABK60560.1"/>
    <property type="molecule type" value="Genomic_DNA"/>
</dbReference>
<dbReference type="RefSeq" id="WP_011721780.1">
    <property type="nucleotide sequence ID" value="NC_008593.1"/>
</dbReference>
<dbReference type="SMR" id="A0PZH1"/>
<dbReference type="STRING" id="386415.NT01CX_1694"/>
<dbReference type="KEGG" id="cno:NT01CX_1694"/>
<dbReference type="eggNOG" id="COG0851">
    <property type="taxonomic scope" value="Bacteria"/>
</dbReference>
<dbReference type="HOGENOM" id="CLU_137929_1_1_9"/>
<dbReference type="Proteomes" id="UP000008220">
    <property type="component" value="Chromosome"/>
</dbReference>
<dbReference type="GO" id="GO:0051301">
    <property type="term" value="P:cell division"/>
    <property type="evidence" value="ECO:0007669"/>
    <property type="project" value="UniProtKB-KW"/>
</dbReference>
<dbReference type="GO" id="GO:0032955">
    <property type="term" value="P:regulation of division septum assembly"/>
    <property type="evidence" value="ECO:0007669"/>
    <property type="project" value="InterPro"/>
</dbReference>
<dbReference type="Gene3D" id="3.30.1070.10">
    <property type="entry name" value="Cell division topological specificity factor MinE"/>
    <property type="match status" value="1"/>
</dbReference>
<dbReference type="HAMAP" id="MF_00262">
    <property type="entry name" value="MinE"/>
    <property type="match status" value="1"/>
</dbReference>
<dbReference type="InterPro" id="IPR005527">
    <property type="entry name" value="MinE"/>
</dbReference>
<dbReference type="InterPro" id="IPR036707">
    <property type="entry name" value="MinE_sf"/>
</dbReference>
<dbReference type="NCBIfam" id="TIGR01215">
    <property type="entry name" value="minE"/>
    <property type="match status" value="1"/>
</dbReference>
<dbReference type="NCBIfam" id="NF001422">
    <property type="entry name" value="PRK00296.1"/>
    <property type="match status" value="1"/>
</dbReference>
<dbReference type="Pfam" id="PF03776">
    <property type="entry name" value="MinE"/>
    <property type="match status" value="1"/>
</dbReference>
<dbReference type="SUPFAM" id="SSF55229">
    <property type="entry name" value="Cell division protein MinE topological specificity domain"/>
    <property type="match status" value="1"/>
</dbReference>
<gene>
    <name evidence="1" type="primary">minE</name>
    <name type="ordered locus">NT01CX_1694</name>
</gene>
<reference key="1">
    <citation type="journal article" date="2006" name="Nat. Biotechnol.">
        <title>The genome and transcriptomes of the anti-tumor agent Clostridium novyi-NT.</title>
        <authorList>
            <person name="Bettegowda C."/>
            <person name="Huang X."/>
            <person name="Lin J."/>
            <person name="Cheong I."/>
            <person name="Kohli M."/>
            <person name="Szabo S.A."/>
            <person name="Zhang X."/>
            <person name="Diaz L.A. Jr."/>
            <person name="Velculescu V.E."/>
            <person name="Parmigiani G."/>
            <person name="Kinzler K.W."/>
            <person name="Vogelstein B."/>
            <person name="Zhou S."/>
        </authorList>
    </citation>
    <scope>NUCLEOTIDE SEQUENCE [LARGE SCALE GENOMIC DNA]</scope>
    <source>
        <strain>NT</strain>
    </source>
</reference>
<protein>
    <recommendedName>
        <fullName evidence="1">Cell division topological specificity factor</fullName>
    </recommendedName>
</protein>
<organism>
    <name type="scientific">Clostridium novyi (strain NT)</name>
    <dbReference type="NCBI Taxonomy" id="386415"/>
    <lineage>
        <taxon>Bacteria</taxon>
        <taxon>Bacillati</taxon>
        <taxon>Bacillota</taxon>
        <taxon>Clostridia</taxon>
        <taxon>Eubacteriales</taxon>
        <taxon>Clostridiaceae</taxon>
        <taxon>Clostridium</taxon>
    </lineage>
</organism>
<name>MINE_CLONN</name>
<proteinExistence type="inferred from homology"/>
<evidence type="ECO:0000255" key="1">
    <source>
        <dbReference type="HAMAP-Rule" id="MF_00262"/>
    </source>
</evidence>
<accession>A0PZH1</accession>
<comment type="function">
    <text evidence="1">Prevents the cell division inhibition by proteins MinC and MinD at internal division sites while permitting inhibition at polar sites. This ensures cell division at the proper site by restricting the formation of a division septum at the midpoint of the long axis of the cell.</text>
</comment>
<comment type="similarity">
    <text evidence="1">Belongs to the MinE family.</text>
</comment>
<keyword id="KW-0131">Cell cycle</keyword>
<keyword id="KW-0132">Cell division</keyword>
<keyword id="KW-1185">Reference proteome</keyword>